<accession>A6QNW6</accession>
<name>S26A8_BOVIN</name>
<comment type="function">
    <text evidence="1 2">Antiporter that mediates the exchange of sulfate and oxalate against chloride ions across a membrane. Stimulates anion transport activity of CFTR (By similarity). May cooperate with CFTR in the regulation of chloride and bicarbonate ions fluxes required for activation of the ADCY10/PKA pathway during sperm motility and sperm capacitation. May play a role in sperm tail differentiation and motility and hence male fertility (By similarity).</text>
</comment>
<comment type="catalytic activity">
    <reaction evidence="2">
        <text>sulfate(out) + chloride(in) = sulfate(in) + chloride(out)</text>
        <dbReference type="Rhea" id="RHEA:75295"/>
        <dbReference type="ChEBI" id="CHEBI:16189"/>
        <dbReference type="ChEBI" id="CHEBI:17996"/>
    </reaction>
</comment>
<comment type="catalytic activity">
    <reaction evidence="2">
        <text>oxalate(in) + chloride(out) = oxalate(out) + chloride(in)</text>
        <dbReference type="Rhea" id="RHEA:72263"/>
        <dbReference type="ChEBI" id="CHEBI:17996"/>
        <dbReference type="ChEBI" id="CHEBI:30623"/>
    </reaction>
</comment>
<comment type="subunit">
    <text evidence="2">Interacts with RACGAP1. Interacts with CFTR; stimulates anion transport activity of CFTR.</text>
</comment>
<comment type="subcellular location">
    <subcellularLocation>
        <location evidence="2">Membrane</location>
        <topology evidence="3">Multi-pass membrane protein</topology>
    </subcellularLocation>
    <text evidence="2">Located at both the annulus and the equatorial segment of the human sperm head.</text>
</comment>
<comment type="PTM">
    <text evidence="2">N-glycosylated.</text>
</comment>
<comment type="similarity">
    <text evidence="3">Belongs to the SLC26A/SulP transporter (TC 2.A.53) family.</text>
</comment>
<reference evidence="6" key="1">
    <citation type="submission" date="2007-07" db="EMBL/GenBank/DDBJ databases">
        <authorList>
            <consortium name="NIH - Mammalian Gene Collection (MGC) project"/>
        </authorList>
    </citation>
    <scope>NUCLEOTIDE SEQUENCE [LARGE SCALE MRNA]</scope>
    <source>
        <strain evidence="6">Hereford</strain>
        <tissue evidence="6">Hypothalamus</tissue>
    </source>
</reference>
<sequence length="960" mass="108744">MQPDRSFQSFASRYRQSSFTYDVKRDVYNEENFQQEHRKKTASSGNVDIDISTVSHHVQCRCSWHKFRRCLLTVFPFLEWMCFYRFKDWLLGDLLAGISVGLVQIPQVLMLGLLARHLIPPLNVSYAAFCASVIYGIFGSCHQMSIGTFFLVSALAINVLRTQPFNRGHLLLGTFIQADFSNTSFYENYNRSLSSVASVTLLTGIIQLSMGMLGFGFIVAYIPEAAISAYLAATALHVMLSQLTCIFGIMISYNSGPIAFFYNIINYCLGLPKANSTSILLFLTAMVALRINKCIRISFNEYPIEFPMEVFLVLGFAAFSNKVNMATENSLMLMEMIPYSFLFPVTPDMSNLTEVLIESFSLALVSSSLLVFLGKKIASFHNYDVNSNQDLIAIGLCNVVSSFFRSYVFTGAVARTIIQDKTGGRQQFASLVGAGIMLLLMMKMARFFYRLPNAIVAGIILSNVLPYLEAVYTLPSLWRQNQYDCLIWMVTFMSAILLGLDIGLVVAVTFAFFIITVQSHRTKILLLGQIPNTNIYRSFQDYREVANIPGVKIFQCCNAITFVNVHYLKRKVLEEIEMVKMPLTEEEIYTLFSQNEEGAQRGKICRCYCNCDEPEPSPRVIYTERYEVQRGRESSFINLVRCSRFESMNTAQTMSEDQVPYITSSSSQRNPNYEEVEKVWLSDDPSRSMTITLPEASDTQVRATKLLPYSTSTILPSIHTIILDFSMVHLVDARALVVLRQMFSAFQNANILVLIAGCHSFVVRSLEKNDFFDAGITKAQLFLTLHDAVLFALSRKLPESSELSVDESETVIQETFSETDKKEESRHKTNRSLIEAPRSKSPGFSLLPDPEMEEESDLDLYSTIQMSKDHGLDLDLDLDREVEPESELEPESELDQETELEPEPEASPKPNRQKYWSLFRAIIPRSPTQTQARTQSVDRRHQNVKPYTSKADTSEDALEI</sequence>
<feature type="chain" id="PRO_0000322585" description="Testis anion transporter 1">
    <location>
        <begin position="1"/>
        <end position="960"/>
    </location>
</feature>
<feature type="topological domain" description="Cytoplasmic" evidence="3">
    <location>
        <begin position="1"/>
        <end position="93"/>
    </location>
</feature>
<feature type="transmembrane region" description="Helical" evidence="3">
    <location>
        <begin position="94"/>
        <end position="114"/>
    </location>
</feature>
<feature type="topological domain" description="Extracellular" evidence="3">
    <location>
        <begin position="115"/>
        <end position="117"/>
    </location>
</feature>
<feature type="transmembrane region" description="Helical" evidence="3">
    <location>
        <begin position="118"/>
        <end position="138"/>
    </location>
</feature>
<feature type="topological domain" description="Cytoplasmic" evidence="3">
    <location>
        <position position="139"/>
    </location>
</feature>
<feature type="transmembrane region" description="Helical" evidence="3">
    <location>
        <begin position="140"/>
        <end position="160"/>
    </location>
</feature>
<feature type="topological domain" description="Extracellular" evidence="3">
    <location>
        <begin position="161"/>
        <end position="201"/>
    </location>
</feature>
<feature type="transmembrane region" description="Helical" evidence="3">
    <location>
        <begin position="202"/>
        <end position="222"/>
    </location>
</feature>
<feature type="transmembrane region" description="Helical" evidence="3">
    <location>
        <begin position="223"/>
        <end position="243"/>
    </location>
</feature>
<feature type="topological domain" description="Cytoplasmic" evidence="3">
    <location>
        <begin position="244"/>
        <end position="268"/>
    </location>
</feature>
<feature type="transmembrane region" description="Helical" evidence="3">
    <location>
        <begin position="269"/>
        <end position="289"/>
    </location>
</feature>
<feature type="topological domain" description="Extracellular" evidence="3">
    <location>
        <begin position="290"/>
        <end position="353"/>
    </location>
</feature>
<feature type="transmembrane region" description="Helical" evidence="3">
    <location>
        <begin position="354"/>
        <end position="374"/>
    </location>
</feature>
<feature type="topological domain" description="Cytoplasmic" evidence="3">
    <location>
        <begin position="375"/>
        <end position="390"/>
    </location>
</feature>
<feature type="transmembrane region" description="Helical" evidence="3">
    <location>
        <begin position="391"/>
        <end position="411"/>
    </location>
</feature>
<feature type="topological domain" description="Extracellular" evidence="3">
    <location>
        <begin position="412"/>
        <end position="427"/>
    </location>
</feature>
<feature type="transmembrane region" description="Helical" evidence="3">
    <location>
        <begin position="428"/>
        <end position="448"/>
    </location>
</feature>
<feature type="topological domain" description="Cytoplasmic" evidence="3">
    <location>
        <begin position="449"/>
        <end position="453"/>
    </location>
</feature>
<feature type="transmembrane region" description="Helical" evidence="3">
    <location>
        <begin position="454"/>
        <end position="474"/>
    </location>
</feature>
<feature type="topological domain" description="Extracellular" evidence="3">
    <location>
        <begin position="475"/>
        <end position="494"/>
    </location>
</feature>
<feature type="transmembrane region" description="Helical" evidence="3">
    <location>
        <begin position="495"/>
        <end position="515"/>
    </location>
</feature>
<feature type="topological domain" description="Cytoplasmic" evidence="3">
    <location>
        <begin position="516"/>
        <end position="960"/>
    </location>
</feature>
<feature type="domain" description="STAS" evidence="4">
    <location>
        <begin position="541"/>
        <end position="792"/>
    </location>
</feature>
<feature type="region of interest" description="Interaction with RACGAP1" evidence="2">
    <location>
        <begin position="662"/>
        <end position="957"/>
    </location>
</feature>
<feature type="region of interest" description="Disordered" evidence="5">
    <location>
        <begin position="807"/>
        <end position="857"/>
    </location>
</feature>
<feature type="region of interest" description="Disordered" evidence="5">
    <location>
        <begin position="881"/>
        <end position="960"/>
    </location>
</feature>
<feature type="compositionally biased region" description="Basic and acidic residues" evidence="5">
    <location>
        <begin position="818"/>
        <end position="827"/>
    </location>
</feature>
<feature type="compositionally biased region" description="Acidic residues" evidence="5">
    <location>
        <begin position="884"/>
        <end position="904"/>
    </location>
</feature>
<feature type="compositionally biased region" description="Polar residues" evidence="5">
    <location>
        <begin position="926"/>
        <end position="935"/>
    </location>
</feature>
<feature type="glycosylation site" description="N-linked (GlcNAc...) asparagine" evidence="3">
    <location>
        <position position="190"/>
    </location>
</feature>
<evidence type="ECO:0000250" key="1">
    <source>
        <dbReference type="UniProtKB" id="Q8R0C3"/>
    </source>
</evidence>
<evidence type="ECO:0000250" key="2">
    <source>
        <dbReference type="UniProtKB" id="Q96RN1"/>
    </source>
</evidence>
<evidence type="ECO:0000255" key="3"/>
<evidence type="ECO:0000255" key="4">
    <source>
        <dbReference type="PROSITE-ProRule" id="PRU00198"/>
    </source>
</evidence>
<evidence type="ECO:0000256" key="5">
    <source>
        <dbReference type="SAM" id="MobiDB-lite"/>
    </source>
</evidence>
<evidence type="ECO:0000312" key="6">
    <source>
        <dbReference type="EMBL" id="AAI49037.1"/>
    </source>
</evidence>
<organism>
    <name type="scientific">Bos taurus</name>
    <name type="common">Bovine</name>
    <dbReference type="NCBI Taxonomy" id="9913"/>
    <lineage>
        <taxon>Eukaryota</taxon>
        <taxon>Metazoa</taxon>
        <taxon>Chordata</taxon>
        <taxon>Craniata</taxon>
        <taxon>Vertebrata</taxon>
        <taxon>Euteleostomi</taxon>
        <taxon>Mammalia</taxon>
        <taxon>Eutheria</taxon>
        <taxon>Laurasiatheria</taxon>
        <taxon>Artiodactyla</taxon>
        <taxon>Ruminantia</taxon>
        <taxon>Pecora</taxon>
        <taxon>Bovidae</taxon>
        <taxon>Bovinae</taxon>
        <taxon>Bos</taxon>
    </lineage>
</organism>
<protein>
    <recommendedName>
        <fullName evidence="2">Testis anion transporter 1</fullName>
    </recommendedName>
    <alternativeName>
        <fullName>Anion exchange transporter</fullName>
    </alternativeName>
    <alternativeName>
        <fullName>Solute carrier family 26 member 8</fullName>
    </alternativeName>
</protein>
<keyword id="KW-0039">Anion exchange</keyword>
<keyword id="KW-0217">Developmental protein</keyword>
<keyword id="KW-0221">Differentiation</keyword>
<keyword id="KW-0325">Glycoprotein</keyword>
<keyword id="KW-0406">Ion transport</keyword>
<keyword id="KW-0469">Meiosis</keyword>
<keyword id="KW-0472">Membrane</keyword>
<keyword id="KW-1185">Reference proteome</keyword>
<keyword id="KW-0744">Spermatogenesis</keyword>
<keyword id="KW-0812">Transmembrane</keyword>
<keyword id="KW-1133">Transmembrane helix</keyword>
<keyword id="KW-0813">Transport</keyword>
<dbReference type="EMBL" id="BC149036">
    <property type="protein sequence ID" value="AAI49037.1"/>
    <property type="molecule type" value="mRNA"/>
</dbReference>
<dbReference type="RefSeq" id="NP_001095600.1">
    <property type="nucleotide sequence ID" value="NM_001102130.2"/>
</dbReference>
<dbReference type="SMR" id="A6QNW6"/>
<dbReference type="FunCoup" id="A6QNW6">
    <property type="interactions" value="50"/>
</dbReference>
<dbReference type="STRING" id="9913.ENSBTAP00000022931"/>
<dbReference type="GlyCosmos" id="A6QNW6">
    <property type="glycosylation" value="1 site, No reported glycans"/>
</dbReference>
<dbReference type="GlyGen" id="A6QNW6">
    <property type="glycosylation" value="1 site"/>
</dbReference>
<dbReference type="PaxDb" id="9913-ENSBTAP00000022931"/>
<dbReference type="GeneID" id="530509"/>
<dbReference type="KEGG" id="bta:530509"/>
<dbReference type="CTD" id="116369"/>
<dbReference type="eggNOG" id="KOG0236">
    <property type="taxonomic scope" value="Eukaryota"/>
</dbReference>
<dbReference type="InParanoid" id="A6QNW6"/>
<dbReference type="OrthoDB" id="288203at2759"/>
<dbReference type="Proteomes" id="UP000009136">
    <property type="component" value="Unplaced"/>
</dbReference>
<dbReference type="GO" id="GO:0005886">
    <property type="term" value="C:plasma membrane"/>
    <property type="evidence" value="ECO:0000318"/>
    <property type="project" value="GO_Central"/>
</dbReference>
<dbReference type="GO" id="GO:0097227">
    <property type="term" value="C:sperm annulus"/>
    <property type="evidence" value="ECO:0000250"/>
    <property type="project" value="UniProtKB"/>
</dbReference>
<dbReference type="GO" id="GO:0015106">
    <property type="term" value="F:bicarbonate transmembrane transporter activity"/>
    <property type="evidence" value="ECO:0000318"/>
    <property type="project" value="GO_Central"/>
</dbReference>
<dbReference type="GO" id="GO:0015108">
    <property type="term" value="F:chloride transmembrane transporter activity"/>
    <property type="evidence" value="ECO:0000318"/>
    <property type="project" value="GO_Central"/>
</dbReference>
<dbReference type="GO" id="GO:0019531">
    <property type="term" value="F:oxalate transmembrane transporter activity"/>
    <property type="evidence" value="ECO:0000318"/>
    <property type="project" value="GO_Central"/>
</dbReference>
<dbReference type="GO" id="GO:0015116">
    <property type="term" value="F:sulfate transmembrane transporter activity"/>
    <property type="evidence" value="ECO:0000318"/>
    <property type="project" value="GO_Central"/>
</dbReference>
<dbReference type="GO" id="GO:0160044">
    <property type="term" value="F:sulfate:chloride antiporter activity"/>
    <property type="evidence" value="ECO:0000250"/>
    <property type="project" value="UniProtKB"/>
</dbReference>
<dbReference type="GO" id="GO:0030154">
    <property type="term" value="P:cell differentiation"/>
    <property type="evidence" value="ECO:0007669"/>
    <property type="project" value="UniProtKB-KW"/>
</dbReference>
<dbReference type="GO" id="GO:1902476">
    <property type="term" value="P:chloride transmembrane transport"/>
    <property type="evidence" value="ECO:0000318"/>
    <property type="project" value="GO_Central"/>
</dbReference>
<dbReference type="GO" id="GO:0006821">
    <property type="term" value="P:chloride transport"/>
    <property type="evidence" value="ECO:0000250"/>
    <property type="project" value="UniProtKB"/>
</dbReference>
<dbReference type="GO" id="GO:0051321">
    <property type="term" value="P:meiotic cell cycle"/>
    <property type="evidence" value="ECO:0007669"/>
    <property type="project" value="UniProtKB-KW"/>
</dbReference>
<dbReference type="GO" id="GO:0007283">
    <property type="term" value="P:spermatogenesis"/>
    <property type="evidence" value="ECO:0007669"/>
    <property type="project" value="UniProtKB-KW"/>
</dbReference>
<dbReference type="GO" id="GO:1902358">
    <property type="term" value="P:sulfate transmembrane transport"/>
    <property type="evidence" value="ECO:0000250"/>
    <property type="project" value="UniProtKB"/>
</dbReference>
<dbReference type="CDD" id="cd07042">
    <property type="entry name" value="STAS_SulP_like_sulfate_transporter"/>
    <property type="match status" value="1"/>
</dbReference>
<dbReference type="Gene3D" id="3.30.750.24">
    <property type="entry name" value="STAS domain"/>
    <property type="match status" value="1"/>
</dbReference>
<dbReference type="InterPro" id="IPR011547">
    <property type="entry name" value="SLC26A/SulP_dom"/>
</dbReference>
<dbReference type="InterPro" id="IPR001902">
    <property type="entry name" value="SLC26A/SulP_fam"/>
</dbReference>
<dbReference type="InterPro" id="IPR002645">
    <property type="entry name" value="STAS_dom"/>
</dbReference>
<dbReference type="InterPro" id="IPR036513">
    <property type="entry name" value="STAS_dom_sf"/>
</dbReference>
<dbReference type="PANTHER" id="PTHR11814">
    <property type="entry name" value="SULFATE TRANSPORTER"/>
    <property type="match status" value="1"/>
</dbReference>
<dbReference type="Pfam" id="PF01740">
    <property type="entry name" value="STAS"/>
    <property type="match status" value="1"/>
</dbReference>
<dbReference type="Pfam" id="PF00916">
    <property type="entry name" value="Sulfate_transp"/>
    <property type="match status" value="1"/>
</dbReference>
<dbReference type="SUPFAM" id="SSF52091">
    <property type="entry name" value="SpoIIaa-like"/>
    <property type="match status" value="1"/>
</dbReference>
<dbReference type="PROSITE" id="PS50801">
    <property type="entry name" value="STAS"/>
    <property type="match status" value="1"/>
</dbReference>
<gene>
    <name evidence="2" type="primary">SLC26A8</name>
</gene>
<proteinExistence type="evidence at transcript level"/>